<comment type="similarity">
    <text evidence="1">Belongs to the UPF0102 family.</text>
</comment>
<gene>
    <name type="ordered locus">PA14_57490</name>
</gene>
<evidence type="ECO:0000255" key="1">
    <source>
        <dbReference type="HAMAP-Rule" id="MF_00048"/>
    </source>
</evidence>
<sequence length="125" mass="14366">MTDRESSRDKGRQAEELACAHLRRQGLATLGKNWTCRRGELDLVMLDGDTVVFVEVRSRRHRAWGGALESIDARKRQRLILSAELFLQQEARWAKRPCRFDVVTVDTSDGQSPPRLDWIQNAFDA</sequence>
<reference key="1">
    <citation type="journal article" date="2006" name="Genome Biol.">
        <title>Genomic analysis reveals that Pseudomonas aeruginosa virulence is combinatorial.</title>
        <authorList>
            <person name="Lee D.G."/>
            <person name="Urbach J.M."/>
            <person name="Wu G."/>
            <person name="Liberati N.T."/>
            <person name="Feinbaum R.L."/>
            <person name="Miyata S."/>
            <person name="Diggins L.T."/>
            <person name="He J."/>
            <person name="Saucier M."/>
            <person name="Deziel E."/>
            <person name="Friedman L."/>
            <person name="Li L."/>
            <person name="Grills G."/>
            <person name="Montgomery K."/>
            <person name="Kucherlapati R."/>
            <person name="Rahme L.G."/>
            <person name="Ausubel F.M."/>
        </authorList>
    </citation>
    <scope>NUCLEOTIDE SEQUENCE [LARGE SCALE GENOMIC DNA]</scope>
    <source>
        <strain>UCBPP-PA14</strain>
    </source>
</reference>
<proteinExistence type="inferred from homology"/>
<protein>
    <recommendedName>
        <fullName evidence="1">UPF0102 protein PA14_57490</fullName>
    </recommendedName>
</protein>
<name>Y5749_PSEAB</name>
<feature type="chain" id="PRO_1000009246" description="UPF0102 protein PA14_57490">
    <location>
        <begin position="1"/>
        <end position="125"/>
    </location>
</feature>
<organism>
    <name type="scientific">Pseudomonas aeruginosa (strain UCBPP-PA14)</name>
    <dbReference type="NCBI Taxonomy" id="208963"/>
    <lineage>
        <taxon>Bacteria</taxon>
        <taxon>Pseudomonadati</taxon>
        <taxon>Pseudomonadota</taxon>
        <taxon>Gammaproteobacteria</taxon>
        <taxon>Pseudomonadales</taxon>
        <taxon>Pseudomonadaceae</taxon>
        <taxon>Pseudomonas</taxon>
    </lineage>
</organism>
<accession>Q02H16</accession>
<dbReference type="EMBL" id="CP000438">
    <property type="protein sequence ID" value="ABJ13693.1"/>
    <property type="molecule type" value="Genomic_DNA"/>
</dbReference>
<dbReference type="RefSeq" id="WP_003110149.1">
    <property type="nucleotide sequence ID" value="NZ_CP034244.1"/>
</dbReference>
<dbReference type="SMR" id="Q02H16"/>
<dbReference type="KEGG" id="pau:PA14_57490"/>
<dbReference type="PseudoCAP" id="PA14_57490"/>
<dbReference type="HOGENOM" id="CLU_115353_1_0_6"/>
<dbReference type="BioCyc" id="PAER208963:G1G74-4842-MONOMER"/>
<dbReference type="Proteomes" id="UP000000653">
    <property type="component" value="Chromosome"/>
</dbReference>
<dbReference type="GO" id="GO:0003676">
    <property type="term" value="F:nucleic acid binding"/>
    <property type="evidence" value="ECO:0007669"/>
    <property type="project" value="InterPro"/>
</dbReference>
<dbReference type="Gene3D" id="3.40.1350.10">
    <property type="match status" value="1"/>
</dbReference>
<dbReference type="HAMAP" id="MF_00048">
    <property type="entry name" value="UPF0102"/>
    <property type="match status" value="1"/>
</dbReference>
<dbReference type="InterPro" id="IPR011335">
    <property type="entry name" value="Restrct_endonuc-II-like"/>
</dbReference>
<dbReference type="InterPro" id="IPR011856">
    <property type="entry name" value="tRNA_endonuc-like_dom_sf"/>
</dbReference>
<dbReference type="InterPro" id="IPR003509">
    <property type="entry name" value="UPF0102_YraN-like"/>
</dbReference>
<dbReference type="NCBIfam" id="NF009150">
    <property type="entry name" value="PRK12497.1-3"/>
    <property type="match status" value="1"/>
</dbReference>
<dbReference type="NCBIfam" id="TIGR00252">
    <property type="entry name" value="YraN family protein"/>
    <property type="match status" value="1"/>
</dbReference>
<dbReference type="PANTHER" id="PTHR34039">
    <property type="entry name" value="UPF0102 PROTEIN YRAN"/>
    <property type="match status" value="1"/>
</dbReference>
<dbReference type="PANTHER" id="PTHR34039:SF1">
    <property type="entry name" value="UPF0102 PROTEIN YRAN"/>
    <property type="match status" value="1"/>
</dbReference>
<dbReference type="Pfam" id="PF02021">
    <property type="entry name" value="UPF0102"/>
    <property type="match status" value="1"/>
</dbReference>
<dbReference type="SUPFAM" id="SSF52980">
    <property type="entry name" value="Restriction endonuclease-like"/>
    <property type="match status" value="1"/>
</dbReference>